<feature type="chain" id="PRO_0000269375" description="Large ribosomal subunit protein bL21">
    <location>
        <begin position="1"/>
        <end position="103"/>
    </location>
</feature>
<proteinExistence type="inferred from homology"/>
<comment type="function">
    <text evidence="1">This protein binds to 23S rRNA in the presence of protein L20.</text>
</comment>
<comment type="subunit">
    <text evidence="1">Part of the 50S ribosomal subunit. Contacts protein L20.</text>
</comment>
<comment type="similarity">
    <text evidence="1">Belongs to the bacterial ribosomal protein bL21 family.</text>
</comment>
<keyword id="KW-1185">Reference proteome</keyword>
<keyword id="KW-0687">Ribonucleoprotein</keyword>
<keyword id="KW-0689">Ribosomal protein</keyword>
<keyword id="KW-0694">RNA-binding</keyword>
<keyword id="KW-0699">rRNA-binding</keyword>
<evidence type="ECO:0000255" key="1">
    <source>
        <dbReference type="HAMAP-Rule" id="MF_01363"/>
    </source>
</evidence>
<evidence type="ECO:0000305" key="2"/>
<protein>
    <recommendedName>
        <fullName evidence="1">Large ribosomal subunit protein bL21</fullName>
    </recommendedName>
    <alternativeName>
        <fullName evidence="2">50S ribosomal protein L21</fullName>
    </alternativeName>
</protein>
<organism>
    <name type="scientific">Shewanella frigidimarina (strain NCIMB 400)</name>
    <dbReference type="NCBI Taxonomy" id="318167"/>
    <lineage>
        <taxon>Bacteria</taxon>
        <taxon>Pseudomonadati</taxon>
        <taxon>Pseudomonadota</taxon>
        <taxon>Gammaproteobacteria</taxon>
        <taxon>Alteromonadales</taxon>
        <taxon>Shewanellaceae</taxon>
        <taxon>Shewanella</taxon>
    </lineage>
</organism>
<gene>
    <name evidence="1" type="primary">rplU</name>
    <name type="ordered locus">Sfri_3089</name>
</gene>
<dbReference type="EMBL" id="CP000447">
    <property type="protein sequence ID" value="ABI72926.1"/>
    <property type="molecule type" value="Genomic_DNA"/>
</dbReference>
<dbReference type="RefSeq" id="WP_011638532.1">
    <property type="nucleotide sequence ID" value="NC_008345.1"/>
</dbReference>
<dbReference type="SMR" id="Q07YI8"/>
<dbReference type="STRING" id="318167.Sfri_3089"/>
<dbReference type="KEGG" id="sfr:Sfri_3089"/>
<dbReference type="eggNOG" id="COG0261">
    <property type="taxonomic scope" value="Bacteria"/>
</dbReference>
<dbReference type="HOGENOM" id="CLU_061463_3_3_6"/>
<dbReference type="OrthoDB" id="9813334at2"/>
<dbReference type="Proteomes" id="UP000000684">
    <property type="component" value="Chromosome"/>
</dbReference>
<dbReference type="GO" id="GO:0005737">
    <property type="term" value="C:cytoplasm"/>
    <property type="evidence" value="ECO:0007669"/>
    <property type="project" value="UniProtKB-ARBA"/>
</dbReference>
<dbReference type="GO" id="GO:1990904">
    <property type="term" value="C:ribonucleoprotein complex"/>
    <property type="evidence" value="ECO:0007669"/>
    <property type="project" value="UniProtKB-KW"/>
</dbReference>
<dbReference type="GO" id="GO:0005840">
    <property type="term" value="C:ribosome"/>
    <property type="evidence" value="ECO:0007669"/>
    <property type="project" value="UniProtKB-KW"/>
</dbReference>
<dbReference type="GO" id="GO:0019843">
    <property type="term" value="F:rRNA binding"/>
    <property type="evidence" value="ECO:0007669"/>
    <property type="project" value="UniProtKB-UniRule"/>
</dbReference>
<dbReference type="GO" id="GO:0003735">
    <property type="term" value="F:structural constituent of ribosome"/>
    <property type="evidence" value="ECO:0007669"/>
    <property type="project" value="InterPro"/>
</dbReference>
<dbReference type="GO" id="GO:0006412">
    <property type="term" value="P:translation"/>
    <property type="evidence" value="ECO:0007669"/>
    <property type="project" value="UniProtKB-UniRule"/>
</dbReference>
<dbReference type="HAMAP" id="MF_01363">
    <property type="entry name" value="Ribosomal_bL21"/>
    <property type="match status" value="1"/>
</dbReference>
<dbReference type="InterPro" id="IPR028909">
    <property type="entry name" value="bL21-like"/>
</dbReference>
<dbReference type="InterPro" id="IPR036164">
    <property type="entry name" value="bL21-like_sf"/>
</dbReference>
<dbReference type="InterPro" id="IPR001787">
    <property type="entry name" value="Ribosomal_bL21"/>
</dbReference>
<dbReference type="InterPro" id="IPR018258">
    <property type="entry name" value="Ribosomal_bL21_CS"/>
</dbReference>
<dbReference type="NCBIfam" id="TIGR00061">
    <property type="entry name" value="L21"/>
    <property type="match status" value="1"/>
</dbReference>
<dbReference type="PANTHER" id="PTHR21349">
    <property type="entry name" value="50S RIBOSOMAL PROTEIN L21"/>
    <property type="match status" value="1"/>
</dbReference>
<dbReference type="PANTHER" id="PTHR21349:SF0">
    <property type="entry name" value="LARGE RIBOSOMAL SUBUNIT PROTEIN BL21M"/>
    <property type="match status" value="1"/>
</dbReference>
<dbReference type="Pfam" id="PF00829">
    <property type="entry name" value="Ribosomal_L21p"/>
    <property type="match status" value="1"/>
</dbReference>
<dbReference type="SUPFAM" id="SSF141091">
    <property type="entry name" value="L21p-like"/>
    <property type="match status" value="1"/>
</dbReference>
<dbReference type="PROSITE" id="PS01169">
    <property type="entry name" value="RIBOSOMAL_L21"/>
    <property type="match status" value="1"/>
</dbReference>
<name>RL21_SHEFN</name>
<sequence length="103" mass="11367">MYAVFQSGGKQHRVAEGHTVRLEKLEVATGETVEFDQVLLIADGETVHVGAPLVAGGKVVAEVVGHGRGEKVTIIKFRRRKHHDKKMGHRQWFTEVKITAISA</sequence>
<reference key="1">
    <citation type="submission" date="2006-08" db="EMBL/GenBank/DDBJ databases">
        <title>Complete sequence of Shewanella frigidimarina NCIMB 400.</title>
        <authorList>
            <consortium name="US DOE Joint Genome Institute"/>
            <person name="Copeland A."/>
            <person name="Lucas S."/>
            <person name="Lapidus A."/>
            <person name="Barry K."/>
            <person name="Detter J.C."/>
            <person name="Glavina del Rio T."/>
            <person name="Hammon N."/>
            <person name="Israni S."/>
            <person name="Dalin E."/>
            <person name="Tice H."/>
            <person name="Pitluck S."/>
            <person name="Fredrickson J.K."/>
            <person name="Kolker E."/>
            <person name="McCuel L.A."/>
            <person name="DiChristina T."/>
            <person name="Nealson K.H."/>
            <person name="Newman D."/>
            <person name="Tiedje J.M."/>
            <person name="Zhou J."/>
            <person name="Romine M.F."/>
            <person name="Culley D.E."/>
            <person name="Serres M."/>
            <person name="Chertkov O."/>
            <person name="Brettin T."/>
            <person name="Bruce D."/>
            <person name="Han C."/>
            <person name="Tapia R."/>
            <person name="Gilna P."/>
            <person name="Schmutz J."/>
            <person name="Larimer F."/>
            <person name="Land M."/>
            <person name="Hauser L."/>
            <person name="Kyrpides N."/>
            <person name="Mikhailova N."/>
            <person name="Richardson P."/>
        </authorList>
    </citation>
    <scope>NUCLEOTIDE SEQUENCE [LARGE SCALE GENOMIC DNA]</scope>
    <source>
        <strain>NCIMB 400</strain>
    </source>
</reference>
<accession>Q07YI8</accession>